<dbReference type="EMBL" id="AY614704">
    <property type="protein sequence ID" value="AAT37166.1"/>
    <property type="molecule type" value="mRNA"/>
</dbReference>
<dbReference type="RefSeq" id="NP_001075640.1">
    <property type="nucleotide sequence ID" value="NM_001082171.2"/>
</dbReference>
<dbReference type="RefSeq" id="XP_051711043.1">
    <property type="nucleotide sequence ID" value="XM_051855083.2"/>
</dbReference>
<dbReference type="SMR" id="Q6IY73"/>
<dbReference type="FunCoup" id="Q6IY73">
    <property type="interactions" value="38"/>
</dbReference>
<dbReference type="STRING" id="9986.ENSOCUP00000016404"/>
<dbReference type="GlyCosmos" id="Q6IY73">
    <property type="glycosylation" value="2 sites, No reported glycans"/>
</dbReference>
<dbReference type="PaxDb" id="9986-ENSOCUP00000016404"/>
<dbReference type="Ensembl" id="ENSOCUT00000023790.2">
    <property type="protein sequence ID" value="ENSOCUP00000016404.2"/>
    <property type="gene ID" value="ENSOCUG00000021932.3"/>
</dbReference>
<dbReference type="GeneID" id="100008946"/>
<dbReference type="KEGG" id="ocu:100008946"/>
<dbReference type="CTD" id="2488"/>
<dbReference type="eggNOG" id="ENOG502S39C">
    <property type="taxonomic scope" value="Eukaryota"/>
</dbReference>
<dbReference type="GeneTree" id="ENSGT00940000160051"/>
<dbReference type="HOGENOM" id="CLU_126319_3_0_1"/>
<dbReference type="InParanoid" id="Q6IY73"/>
<dbReference type="OMA" id="PVATGCH"/>
<dbReference type="OrthoDB" id="8453657at2759"/>
<dbReference type="Proteomes" id="UP000001811">
    <property type="component" value="Chromosome 1"/>
</dbReference>
<dbReference type="Bgee" id="ENSOCUG00000021932">
    <property type="expression patterns" value="Expressed in uterus"/>
</dbReference>
<dbReference type="ExpressionAtlas" id="Q6IY73">
    <property type="expression patterns" value="baseline"/>
</dbReference>
<dbReference type="GO" id="GO:0005737">
    <property type="term" value="C:cytoplasm"/>
    <property type="evidence" value="ECO:0007669"/>
    <property type="project" value="Ensembl"/>
</dbReference>
<dbReference type="GO" id="GO:0005615">
    <property type="term" value="C:extracellular space"/>
    <property type="evidence" value="ECO:0000250"/>
    <property type="project" value="UniProtKB"/>
</dbReference>
<dbReference type="GO" id="GO:0016914">
    <property type="term" value="C:follicle-stimulating hormone complex"/>
    <property type="evidence" value="ECO:0000250"/>
    <property type="project" value="UniProtKB"/>
</dbReference>
<dbReference type="GO" id="GO:0016913">
    <property type="term" value="F:follicle-stimulating hormone activity"/>
    <property type="evidence" value="ECO:0000250"/>
    <property type="project" value="UniProtKB"/>
</dbReference>
<dbReference type="GO" id="GO:0042699">
    <property type="term" value="P:follicle-stimulating hormone signaling pathway"/>
    <property type="evidence" value="ECO:0007669"/>
    <property type="project" value="Ensembl"/>
</dbReference>
<dbReference type="GO" id="GO:0007186">
    <property type="term" value="P:G protein-coupled receptor signaling pathway"/>
    <property type="evidence" value="ECO:0000250"/>
    <property type="project" value="UniProtKB"/>
</dbReference>
<dbReference type="GO" id="GO:0045780">
    <property type="term" value="P:positive regulation of bone resorption"/>
    <property type="evidence" value="ECO:0007669"/>
    <property type="project" value="Ensembl"/>
</dbReference>
<dbReference type="GO" id="GO:0010628">
    <property type="term" value="P:positive regulation of gene expression"/>
    <property type="evidence" value="ECO:0007669"/>
    <property type="project" value="Ensembl"/>
</dbReference>
<dbReference type="GO" id="GO:0010893">
    <property type="term" value="P:positive regulation of steroid biosynthetic process"/>
    <property type="evidence" value="ECO:0007669"/>
    <property type="project" value="Ensembl"/>
</dbReference>
<dbReference type="GO" id="GO:0045670">
    <property type="term" value="P:regulation of osteoclast differentiation"/>
    <property type="evidence" value="ECO:0007669"/>
    <property type="project" value="Ensembl"/>
</dbReference>
<dbReference type="GO" id="GO:0010469">
    <property type="term" value="P:regulation of signaling receptor activity"/>
    <property type="evidence" value="ECO:0000250"/>
    <property type="project" value="UniProtKB"/>
</dbReference>
<dbReference type="GO" id="GO:0060011">
    <property type="term" value="P:Sertoli cell proliferation"/>
    <property type="evidence" value="ECO:0007669"/>
    <property type="project" value="Ensembl"/>
</dbReference>
<dbReference type="GO" id="GO:0007283">
    <property type="term" value="P:spermatogenesis"/>
    <property type="evidence" value="ECO:0007669"/>
    <property type="project" value="Ensembl"/>
</dbReference>
<dbReference type="GO" id="GO:0007179">
    <property type="term" value="P:transforming growth factor beta receptor signaling pathway"/>
    <property type="evidence" value="ECO:0007669"/>
    <property type="project" value="Ensembl"/>
</dbReference>
<dbReference type="CDD" id="cd00069">
    <property type="entry name" value="GHB_like"/>
    <property type="match status" value="1"/>
</dbReference>
<dbReference type="FunFam" id="2.10.90.10:FF:000007">
    <property type="entry name" value="Luteinizing hormone beta subunit"/>
    <property type="match status" value="1"/>
</dbReference>
<dbReference type="Gene3D" id="2.10.90.10">
    <property type="entry name" value="Cystine-knot cytokines"/>
    <property type="match status" value="1"/>
</dbReference>
<dbReference type="InterPro" id="IPR029034">
    <property type="entry name" value="Cystine-knot_cytokine"/>
</dbReference>
<dbReference type="InterPro" id="IPR006208">
    <property type="entry name" value="Glyco_hormone_CN"/>
</dbReference>
<dbReference type="InterPro" id="IPR001545">
    <property type="entry name" value="Gonadotropin_bsu"/>
</dbReference>
<dbReference type="InterPro" id="IPR018245">
    <property type="entry name" value="Gonadotropin_bsu_CS"/>
</dbReference>
<dbReference type="PANTHER" id="PTHR11515:SF17">
    <property type="entry name" value="FOLLITROPIN SUBUNIT BETA"/>
    <property type="match status" value="1"/>
</dbReference>
<dbReference type="PANTHER" id="PTHR11515">
    <property type="entry name" value="GLYCOPROTEIN HORMONE BETA CHAIN"/>
    <property type="match status" value="1"/>
</dbReference>
<dbReference type="Pfam" id="PF00007">
    <property type="entry name" value="Cys_knot"/>
    <property type="match status" value="1"/>
</dbReference>
<dbReference type="SMART" id="SM00068">
    <property type="entry name" value="GHB"/>
    <property type="match status" value="1"/>
</dbReference>
<dbReference type="SUPFAM" id="SSF57501">
    <property type="entry name" value="Cystine-knot cytokines"/>
    <property type="match status" value="1"/>
</dbReference>
<dbReference type="PROSITE" id="PS00261">
    <property type="entry name" value="GLYCO_HORMONE_BETA_1"/>
    <property type="match status" value="1"/>
</dbReference>
<dbReference type="PROSITE" id="PS00689">
    <property type="entry name" value="GLYCO_HORMONE_BETA_2"/>
    <property type="match status" value="1"/>
</dbReference>
<proteinExistence type="evidence at transcript level"/>
<evidence type="ECO:0000250" key="1"/>
<evidence type="ECO:0000250" key="2">
    <source>
        <dbReference type="UniProtKB" id="P01225"/>
    </source>
</evidence>
<evidence type="ECO:0000305" key="3"/>
<sequence length="129" mass="14588">MKSVQFCFLFCCWKAICCSSCELTNITIAVEKEECRFCISINTTWCSGYCYTRDLVYKDPARPNIQKICTFKELVYETVRVPGCAHHADSLYTYPVATECHCGNCDSDSTDCTVRGLGPSYCSFGEMKE</sequence>
<feature type="signal peptide" evidence="1">
    <location>
        <begin position="1"/>
        <end position="18"/>
    </location>
</feature>
<feature type="chain" id="PRO_0000042863" description="Follitropin subunit beta">
    <location>
        <begin position="19"/>
        <end position="129"/>
    </location>
</feature>
<feature type="glycosylation site" description="N-linked (GlcNAc...) asparagine" evidence="2">
    <location>
        <position position="25"/>
    </location>
</feature>
<feature type="glycosylation site" description="N-linked (GlcNAc...) asparagine" evidence="2">
    <location>
        <position position="42"/>
    </location>
</feature>
<feature type="disulfide bond" evidence="2">
    <location>
        <begin position="21"/>
        <end position="69"/>
    </location>
</feature>
<feature type="disulfide bond" evidence="2">
    <location>
        <begin position="35"/>
        <end position="84"/>
    </location>
</feature>
<feature type="disulfide bond" evidence="2">
    <location>
        <begin position="38"/>
        <end position="122"/>
    </location>
</feature>
<feature type="disulfide bond" evidence="2">
    <location>
        <begin position="46"/>
        <end position="100"/>
    </location>
</feature>
<feature type="disulfide bond" evidence="2">
    <location>
        <begin position="50"/>
        <end position="102"/>
    </location>
</feature>
<feature type="disulfide bond" evidence="2">
    <location>
        <begin position="105"/>
        <end position="112"/>
    </location>
</feature>
<gene>
    <name type="primary">FSHB</name>
</gene>
<protein>
    <recommendedName>
        <fullName>Follitropin subunit beta</fullName>
    </recommendedName>
    <alternativeName>
        <fullName>Follicle-stimulating hormone beta subunit</fullName>
        <shortName>FSH-B</shortName>
        <shortName>FSH-beta</shortName>
    </alternativeName>
    <alternativeName>
        <fullName>Follitropin beta chain</fullName>
    </alternativeName>
</protein>
<accession>Q6IY73</accession>
<reference key="1">
    <citation type="submission" date="2004-06" db="EMBL/GenBank/DDBJ databases">
        <authorList>
            <person name="Suzuki O."/>
        </authorList>
    </citation>
    <scope>NUCLEOTIDE SEQUENCE [MRNA]</scope>
    <source>
        <strain>Japanese white</strain>
        <tissue>Pituitary</tissue>
    </source>
</reference>
<organism>
    <name type="scientific">Oryctolagus cuniculus</name>
    <name type="common">Rabbit</name>
    <dbReference type="NCBI Taxonomy" id="9986"/>
    <lineage>
        <taxon>Eukaryota</taxon>
        <taxon>Metazoa</taxon>
        <taxon>Chordata</taxon>
        <taxon>Craniata</taxon>
        <taxon>Vertebrata</taxon>
        <taxon>Euteleostomi</taxon>
        <taxon>Mammalia</taxon>
        <taxon>Eutheria</taxon>
        <taxon>Euarchontoglires</taxon>
        <taxon>Glires</taxon>
        <taxon>Lagomorpha</taxon>
        <taxon>Leporidae</taxon>
        <taxon>Oryctolagus</taxon>
    </lineage>
</organism>
<keyword id="KW-1015">Disulfide bond</keyword>
<keyword id="KW-0325">Glycoprotein</keyword>
<keyword id="KW-0372">Hormone</keyword>
<keyword id="KW-1185">Reference proteome</keyword>
<keyword id="KW-0964">Secreted</keyword>
<keyword id="KW-0732">Signal</keyword>
<name>FSHB_RABIT</name>
<comment type="function">
    <text evidence="2">Together with the alpha chain CGA constitutes follitropin, the follicle-stimulating hormone, and provides its biological specificity to the hormone heterodimer. Binds FSHR, a G protein-coupled receptor, on target cells to activate downstream signaling pathways. Follitropin is involved in follicle development and spermatogenesis in reproductive organs.</text>
</comment>
<comment type="subunit">
    <text evidence="2">Heterodimer. The active follitropin is a heterodimer composed of an alpha chain/CGA shared with other hormones and a unique beta chain/FSHB shown here.</text>
</comment>
<comment type="subcellular location">
    <subcellularLocation>
        <location evidence="2">Secreted</location>
    </subcellularLocation>
    <text evidence="2">Efficient secretion requires dimerization with CGA.</text>
</comment>
<comment type="similarity">
    <text evidence="3">Belongs to the glycoprotein hormones subunit beta family.</text>
</comment>